<feature type="chain" id="PRO_0000346390" description="Methylenetetrahydrofolate--tRNA-(uracil-5-)-methyltransferase TrmFO">
    <location>
        <begin position="1"/>
        <end position="482"/>
    </location>
</feature>
<feature type="region of interest" description="Disordered" evidence="2">
    <location>
        <begin position="450"/>
        <end position="482"/>
    </location>
</feature>
<feature type="binding site" evidence="1">
    <location>
        <begin position="11"/>
        <end position="16"/>
    </location>
    <ligand>
        <name>FAD</name>
        <dbReference type="ChEBI" id="CHEBI:57692"/>
    </ligand>
</feature>
<keyword id="KW-0963">Cytoplasm</keyword>
<keyword id="KW-0274">FAD</keyword>
<keyword id="KW-0285">Flavoprotein</keyword>
<keyword id="KW-0489">Methyltransferase</keyword>
<keyword id="KW-0520">NAD</keyword>
<keyword id="KW-0521">NADP</keyword>
<keyword id="KW-1185">Reference proteome</keyword>
<keyword id="KW-0808">Transferase</keyword>
<keyword id="KW-0819">tRNA processing</keyword>
<accession>Q2RTI8</accession>
<dbReference type="EC" id="2.1.1.74" evidence="1"/>
<dbReference type="EMBL" id="CP000230">
    <property type="protein sequence ID" value="ABC22557.1"/>
    <property type="molecule type" value="Genomic_DNA"/>
</dbReference>
<dbReference type="RefSeq" id="WP_011389510.1">
    <property type="nucleotide sequence ID" value="NC_007643.1"/>
</dbReference>
<dbReference type="RefSeq" id="YP_426844.1">
    <property type="nucleotide sequence ID" value="NC_007643.1"/>
</dbReference>
<dbReference type="SMR" id="Q2RTI8"/>
<dbReference type="STRING" id="269796.Rru_A1757"/>
<dbReference type="EnsemblBacteria" id="ABC22557">
    <property type="protein sequence ID" value="ABC22557"/>
    <property type="gene ID" value="Rru_A1757"/>
</dbReference>
<dbReference type="KEGG" id="rru:Rru_A1757"/>
<dbReference type="PATRIC" id="fig|269796.9.peg.1835"/>
<dbReference type="eggNOG" id="COG1206">
    <property type="taxonomic scope" value="Bacteria"/>
</dbReference>
<dbReference type="HOGENOM" id="CLU_033057_1_0_5"/>
<dbReference type="PhylomeDB" id="Q2RTI8"/>
<dbReference type="Proteomes" id="UP000001929">
    <property type="component" value="Chromosome"/>
</dbReference>
<dbReference type="GO" id="GO:0005829">
    <property type="term" value="C:cytosol"/>
    <property type="evidence" value="ECO:0007669"/>
    <property type="project" value="TreeGrafter"/>
</dbReference>
<dbReference type="GO" id="GO:0050660">
    <property type="term" value="F:flavin adenine dinucleotide binding"/>
    <property type="evidence" value="ECO:0007669"/>
    <property type="project" value="UniProtKB-UniRule"/>
</dbReference>
<dbReference type="GO" id="GO:0047151">
    <property type="term" value="F:tRNA (uracil(54)-C5)-methyltransferase activity, 5,10-methylenetetrahydrofolate-dependent"/>
    <property type="evidence" value="ECO:0007669"/>
    <property type="project" value="UniProtKB-UniRule"/>
</dbReference>
<dbReference type="GO" id="GO:0030488">
    <property type="term" value="P:tRNA methylation"/>
    <property type="evidence" value="ECO:0007669"/>
    <property type="project" value="TreeGrafter"/>
</dbReference>
<dbReference type="GO" id="GO:0002098">
    <property type="term" value="P:tRNA wobble uridine modification"/>
    <property type="evidence" value="ECO:0007669"/>
    <property type="project" value="TreeGrafter"/>
</dbReference>
<dbReference type="Gene3D" id="3.50.50.60">
    <property type="entry name" value="FAD/NAD(P)-binding domain"/>
    <property type="match status" value="2"/>
</dbReference>
<dbReference type="HAMAP" id="MF_01037">
    <property type="entry name" value="TrmFO"/>
    <property type="match status" value="1"/>
</dbReference>
<dbReference type="InterPro" id="IPR036188">
    <property type="entry name" value="FAD/NAD-bd_sf"/>
</dbReference>
<dbReference type="InterPro" id="IPR002218">
    <property type="entry name" value="MnmG-rel"/>
</dbReference>
<dbReference type="InterPro" id="IPR020595">
    <property type="entry name" value="MnmG-rel_CS"/>
</dbReference>
<dbReference type="InterPro" id="IPR040131">
    <property type="entry name" value="MnmG_N"/>
</dbReference>
<dbReference type="InterPro" id="IPR004417">
    <property type="entry name" value="TrmFO"/>
</dbReference>
<dbReference type="NCBIfam" id="TIGR00137">
    <property type="entry name" value="gid_trmFO"/>
    <property type="match status" value="1"/>
</dbReference>
<dbReference type="NCBIfam" id="NF003739">
    <property type="entry name" value="PRK05335.1"/>
    <property type="match status" value="1"/>
</dbReference>
<dbReference type="PANTHER" id="PTHR11806">
    <property type="entry name" value="GLUCOSE INHIBITED DIVISION PROTEIN A"/>
    <property type="match status" value="1"/>
</dbReference>
<dbReference type="PANTHER" id="PTHR11806:SF2">
    <property type="entry name" value="METHYLENETETRAHYDROFOLATE--TRNA-(URACIL-5-)-METHYLTRANSFERASE TRMFO"/>
    <property type="match status" value="1"/>
</dbReference>
<dbReference type="Pfam" id="PF01134">
    <property type="entry name" value="GIDA"/>
    <property type="match status" value="1"/>
</dbReference>
<dbReference type="SUPFAM" id="SSF51905">
    <property type="entry name" value="FAD/NAD(P)-binding domain"/>
    <property type="match status" value="1"/>
</dbReference>
<dbReference type="PROSITE" id="PS01281">
    <property type="entry name" value="GIDA_2"/>
    <property type="match status" value="1"/>
</dbReference>
<reference key="1">
    <citation type="journal article" date="2011" name="Stand. Genomic Sci.">
        <title>Complete genome sequence of Rhodospirillum rubrum type strain (S1).</title>
        <authorList>
            <person name="Munk A.C."/>
            <person name="Copeland A."/>
            <person name="Lucas S."/>
            <person name="Lapidus A."/>
            <person name="Del Rio T.G."/>
            <person name="Barry K."/>
            <person name="Detter J.C."/>
            <person name="Hammon N."/>
            <person name="Israni S."/>
            <person name="Pitluck S."/>
            <person name="Brettin T."/>
            <person name="Bruce D."/>
            <person name="Han C."/>
            <person name="Tapia R."/>
            <person name="Gilna P."/>
            <person name="Schmutz J."/>
            <person name="Larimer F."/>
            <person name="Land M."/>
            <person name="Kyrpides N.C."/>
            <person name="Mavromatis K."/>
            <person name="Richardson P."/>
            <person name="Rohde M."/>
            <person name="Goeker M."/>
            <person name="Klenk H.P."/>
            <person name="Zhang Y."/>
            <person name="Roberts G.P."/>
            <person name="Reslewic S."/>
            <person name="Schwartz D.C."/>
        </authorList>
    </citation>
    <scope>NUCLEOTIDE SEQUENCE [LARGE SCALE GENOMIC DNA]</scope>
    <source>
        <strain>ATCC 11170 / ATH 1.1.1 / DSM 467 / LMG 4362 / NCIMB 8255 / S1</strain>
    </source>
</reference>
<gene>
    <name evidence="1" type="primary">trmFO</name>
    <name type="ordered locus">Rru_A1757</name>
</gene>
<proteinExistence type="inferred from homology"/>
<comment type="function">
    <text evidence="1">Catalyzes the folate-dependent formation of 5-methyl-uridine at position 54 (M-5-U54) in all tRNAs.</text>
</comment>
<comment type="catalytic activity">
    <reaction evidence="1">
        <text>uridine(54) in tRNA + (6R)-5,10-methylene-5,6,7,8-tetrahydrofolate + NADH + H(+) = 5-methyluridine(54) in tRNA + (6S)-5,6,7,8-tetrahydrofolate + NAD(+)</text>
        <dbReference type="Rhea" id="RHEA:16873"/>
        <dbReference type="Rhea" id="RHEA-COMP:10167"/>
        <dbReference type="Rhea" id="RHEA-COMP:10193"/>
        <dbReference type="ChEBI" id="CHEBI:15378"/>
        <dbReference type="ChEBI" id="CHEBI:15636"/>
        <dbReference type="ChEBI" id="CHEBI:57453"/>
        <dbReference type="ChEBI" id="CHEBI:57540"/>
        <dbReference type="ChEBI" id="CHEBI:57945"/>
        <dbReference type="ChEBI" id="CHEBI:65315"/>
        <dbReference type="ChEBI" id="CHEBI:74447"/>
        <dbReference type="EC" id="2.1.1.74"/>
    </reaction>
</comment>
<comment type="catalytic activity">
    <reaction evidence="1">
        <text>uridine(54) in tRNA + (6R)-5,10-methylene-5,6,7,8-tetrahydrofolate + NADPH + H(+) = 5-methyluridine(54) in tRNA + (6S)-5,6,7,8-tetrahydrofolate + NADP(+)</text>
        <dbReference type="Rhea" id="RHEA:62372"/>
        <dbReference type="Rhea" id="RHEA-COMP:10167"/>
        <dbReference type="Rhea" id="RHEA-COMP:10193"/>
        <dbReference type="ChEBI" id="CHEBI:15378"/>
        <dbReference type="ChEBI" id="CHEBI:15636"/>
        <dbReference type="ChEBI" id="CHEBI:57453"/>
        <dbReference type="ChEBI" id="CHEBI:57783"/>
        <dbReference type="ChEBI" id="CHEBI:58349"/>
        <dbReference type="ChEBI" id="CHEBI:65315"/>
        <dbReference type="ChEBI" id="CHEBI:74447"/>
        <dbReference type="EC" id="2.1.1.74"/>
    </reaction>
</comment>
<comment type="cofactor">
    <cofactor evidence="1">
        <name>FAD</name>
        <dbReference type="ChEBI" id="CHEBI:57692"/>
    </cofactor>
</comment>
<comment type="subcellular location">
    <subcellularLocation>
        <location evidence="1">Cytoplasm</location>
    </subcellularLocation>
</comment>
<comment type="similarity">
    <text evidence="1">Belongs to the MnmG family. TrmFO subfamily.</text>
</comment>
<name>TRMFO_RHORT</name>
<protein>
    <recommendedName>
        <fullName evidence="1">Methylenetetrahydrofolate--tRNA-(uracil-5-)-methyltransferase TrmFO</fullName>
        <ecNumber evidence="1">2.1.1.74</ecNumber>
    </recommendedName>
    <alternativeName>
        <fullName evidence="1">Folate-dependent tRNA (uracil-5-)-methyltransferase</fullName>
    </alternativeName>
    <alternativeName>
        <fullName evidence="1">Folate-dependent tRNA(M-5-U54)-methyltransferase</fullName>
    </alternativeName>
</protein>
<organism>
    <name type="scientific">Rhodospirillum rubrum (strain ATCC 11170 / ATH 1.1.1 / DSM 467 / LMG 4362 / NCIMB 8255 / S1)</name>
    <dbReference type="NCBI Taxonomy" id="269796"/>
    <lineage>
        <taxon>Bacteria</taxon>
        <taxon>Pseudomonadati</taxon>
        <taxon>Pseudomonadota</taxon>
        <taxon>Alphaproteobacteria</taxon>
        <taxon>Rhodospirillales</taxon>
        <taxon>Rhodospirillaceae</taxon>
        <taxon>Rhodospirillum</taxon>
    </lineage>
</organism>
<sequence length="482" mass="51825">MTQHPPLTIVGGGLAGCEAAWQAARAGLRVILIEMRPLRTTEAHLGDGLAELVCSNSLRSDDPLYNAVGLLHEEMRRAGSLILAMAEAHRVPAGGALAVDRQGFSDAITRALAEHPLIEIRRGEVDRLPAVEDGPAIIASGPLTSAALAAAIAEATGETSLAFFDAIAPIVHKDSIDFDRAWFQSRYDKGDGRDYINCPLTRDQYDAFVDALLAGEKTMFKEWEGTPYFDGCLPIEVMAERGRETLAFGPMKPVGLTDPRNPGLRPHAVVQLRQDNALGTLYNMVGFQTKLKHGEQARIFRMIPGLENAEFARLGGIHRNTFLNSPRLLDPTLRLKARPHLRFAGQITGCEGYVESAAIGLLAGRFASAEILDAASFAPPPPTTALGGLLGHITGGANAETFQPMNVNFGLLPPLEARPVRPGAKPRVPKGRERKLESARRALVDLGDWLRQPSPWSAEDSPRAALPIPEPTPLGPASGSSE</sequence>
<evidence type="ECO:0000255" key="1">
    <source>
        <dbReference type="HAMAP-Rule" id="MF_01037"/>
    </source>
</evidence>
<evidence type="ECO:0000256" key="2">
    <source>
        <dbReference type="SAM" id="MobiDB-lite"/>
    </source>
</evidence>